<proteinExistence type="evidence at protein level"/>
<feature type="chain" id="PRO_0000054362" description="Multiple antibiotic resistance protein MarR">
    <location>
        <begin position="1"/>
        <end position="144"/>
    </location>
</feature>
<feature type="domain" description="HTH marR-type" evidence="1">
    <location>
        <begin position="11"/>
        <end position="144"/>
    </location>
</feature>
<feature type="mutagenesis site" description="Increased transcription of the region II transcript." evidence="2">
    <original>V</original>
    <variation>E</variation>
    <location>
        <position position="45"/>
    </location>
</feature>
<feature type="mutagenesis site" description="Increased transcription of the region II transcript." evidence="2">
    <original>R</original>
    <variation>L</variation>
    <location>
        <position position="77"/>
    </location>
</feature>
<feature type="mutagenesis site" description="Increased transcription of the region II transcript." evidence="2">
    <location>
        <begin position="123"/>
        <end position="144"/>
    </location>
</feature>
<feature type="helix" evidence="5">
    <location>
        <begin position="7"/>
        <end position="11"/>
    </location>
</feature>
<feature type="helix" evidence="3">
    <location>
        <begin position="14"/>
        <end position="33"/>
    </location>
</feature>
<feature type="turn" evidence="3">
    <location>
        <begin position="34"/>
        <end position="37"/>
    </location>
</feature>
<feature type="helix" evidence="3">
    <location>
        <begin position="40"/>
        <end position="52"/>
    </location>
</feature>
<feature type="strand" evidence="3">
    <location>
        <begin position="53"/>
        <end position="55"/>
    </location>
</feature>
<feature type="helix" evidence="3">
    <location>
        <begin position="57"/>
        <end position="64"/>
    </location>
</feature>
<feature type="helix" evidence="3">
    <location>
        <begin position="68"/>
        <end position="80"/>
    </location>
</feature>
<feature type="strand" evidence="3">
    <location>
        <begin position="83"/>
        <end position="88"/>
    </location>
</feature>
<feature type="turn" evidence="4">
    <location>
        <begin position="90"/>
        <end position="92"/>
    </location>
</feature>
<feature type="strand" evidence="3">
    <location>
        <begin position="96"/>
        <end position="100"/>
    </location>
</feature>
<feature type="helix" evidence="3">
    <location>
        <begin position="102"/>
        <end position="124"/>
    </location>
</feature>
<feature type="turn" evidence="3">
    <location>
        <begin position="125"/>
        <end position="130"/>
    </location>
</feature>
<feature type="helix" evidence="3">
    <location>
        <begin position="132"/>
        <end position="140"/>
    </location>
</feature>
<protein>
    <recommendedName>
        <fullName>Multiple antibiotic resistance protein MarR</fullName>
    </recommendedName>
</protein>
<name>MARR_ECOLI</name>
<gene>
    <name type="primary">marR</name>
    <name type="synonym">cfxB</name>
    <name type="synonym">inaR</name>
    <name type="synonym">soxQ</name>
    <name type="ordered locus">b1530</name>
    <name type="ordered locus">JW5248</name>
</gene>
<accession>P27245</accession>
<accession>P76882</accession>
<accession>P77582</accession>
<organism>
    <name type="scientific">Escherichia coli (strain K12)</name>
    <dbReference type="NCBI Taxonomy" id="83333"/>
    <lineage>
        <taxon>Bacteria</taxon>
        <taxon>Pseudomonadati</taxon>
        <taxon>Pseudomonadota</taxon>
        <taxon>Gammaproteobacteria</taxon>
        <taxon>Enterobacterales</taxon>
        <taxon>Enterobacteriaceae</taxon>
        <taxon>Escherichia</taxon>
    </lineage>
</organism>
<sequence>MKSTSDLFNEIIPLGRLIHMVNQKKDRLLNEYLSPLDITAAQFKVLCSIRCAACITPVELKKVLSVDLGALTRMLDRLVCKGWVERLPNPNDKRGVLVKLTTGGAAICEQCHQLVGQDLHQELTKNLTADEVATLEYLLKKVLP</sequence>
<reference key="1">
    <citation type="journal article" date="1993" name="J. Bacteriol.">
        <title>Genetic and functional analysis of the multiple antibiotic resistance (mar) locus in Escherichia coli.</title>
        <authorList>
            <person name="Cohen S.P."/>
            <person name="Haechler H."/>
            <person name="Levy S.B."/>
        </authorList>
    </citation>
    <scope>NUCLEOTIDE SEQUENCE [GENOMIC DNA]</scope>
</reference>
<reference key="2">
    <citation type="journal article" date="1996" name="DNA Res.">
        <title>A 570-kb DNA sequence of the Escherichia coli K-12 genome corresponding to the 28.0-40.1 min region on the linkage map.</title>
        <authorList>
            <person name="Aiba H."/>
            <person name="Baba T."/>
            <person name="Fujita K."/>
            <person name="Hayashi K."/>
            <person name="Inada T."/>
            <person name="Isono K."/>
            <person name="Itoh T."/>
            <person name="Kasai H."/>
            <person name="Kashimoto K."/>
            <person name="Kimura S."/>
            <person name="Kitakawa M."/>
            <person name="Kitagawa M."/>
            <person name="Makino K."/>
            <person name="Miki T."/>
            <person name="Mizobuchi K."/>
            <person name="Mori H."/>
            <person name="Mori T."/>
            <person name="Motomura K."/>
            <person name="Nakade S."/>
            <person name="Nakamura Y."/>
            <person name="Nashimoto H."/>
            <person name="Nishio Y."/>
            <person name="Oshima T."/>
            <person name="Saito N."/>
            <person name="Sampei G."/>
            <person name="Seki Y."/>
            <person name="Sivasundaram S."/>
            <person name="Tagami H."/>
            <person name="Takeda J."/>
            <person name="Takemoto K."/>
            <person name="Takeuchi Y."/>
            <person name="Wada C."/>
            <person name="Yamamoto Y."/>
            <person name="Horiuchi T."/>
        </authorList>
    </citation>
    <scope>NUCLEOTIDE SEQUENCE [LARGE SCALE GENOMIC DNA]</scope>
    <source>
        <strain>K12 / W3110 / ATCC 27325 / DSM 5911</strain>
    </source>
</reference>
<reference key="3">
    <citation type="journal article" date="1997" name="Science">
        <title>The complete genome sequence of Escherichia coli K-12.</title>
        <authorList>
            <person name="Blattner F.R."/>
            <person name="Plunkett G. III"/>
            <person name="Bloch C.A."/>
            <person name="Perna N.T."/>
            <person name="Burland V."/>
            <person name="Riley M."/>
            <person name="Collado-Vides J."/>
            <person name="Glasner J.D."/>
            <person name="Rode C.K."/>
            <person name="Mayhew G.F."/>
            <person name="Gregor J."/>
            <person name="Davis N.W."/>
            <person name="Kirkpatrick H.A."/>
            <person name="Goeden M.A."/>
            <person name="Rose D.J."/>
            <person name="Mau B."/>
            <person name="Shao Y."/>
        </authorList>
    </citation>
    <scope>NUCLEOTIDE SEQUENCE [LARGE SCALE GENOMIC DNA]</scope>
    <source>
        <strain>K12 / MG1655 / ATCC 47076</strain>
    </source>
</reference>
<reference key="4">
    <citation type="journal article" date="2006" name="Mol. Syst. Biol.">
        <title>Highly accurate genome sequences of Escherichia coli K-12 strains MG1655 and W3110.</title>
        <authorList>
            <person name="Hayashi K."/>
            <person name="Morooka N."/>
            <person name="Yamamoto Y."/>
            <person name="Fujita K."/>
            <person name="Isono K."/>
            <person name="Choi S."/>
            <person name="Ohtsubo E."/>
            <person name="Baba T."/>
            <person name="Wanner B.L."/>
            <person name="Mori H."/>
            <person name="Horiuchi T."/>
        </authorList>
    </citation>
    <scope>NUCLEOTIDE SEQUENCE [LARGE SCALE GENOMIC DNA]</scope>
    <source>
        <strain>K12 / W3110 / ATCC 27325 / DSM 5911</strain>
    </source>
</reference>
<reference key="5">
    <citation type="journal article" date="1994" name="J. Bacteriol.">
        <title>Repressor mutations in the marRAB operon that activate oxidative stress genes and multiple antibiotic resistance in Escherichia coli.</title>
        <authorList>
            <person name="Ariza R.R."/>
            <person name="Cohen S.P."/>
            <person name="Bachhawat N."/>
            <person name="Levy S.B."/>
            <person name="Demple B."/>
        </authorList>
    </citation>
    <scope>CHARACTERIZATION</scope>
</reference>
<reference key="6">
    <citation type="journal article" date="1995" name="J. Bacteriol.">
        <title>Characterization of MarR, the repressor of the multiple antibiotic resistance (mar) operon in Escherichia coli.</title>
        <authorList>
            <person name="Seoane A.S."/>
            <person name="Levy S.B."/>
        </authorList>
    </citation>
    <scope>CHARACTERIZATION</scope>
</reference>
<reference key="7">
    <citation type="journal article" date="2000" name="Mol. Microbiol.">
        <title>Mutational analysis of MarR, the negative regulator of marRAB expression in Escherichia coli, suggests the presence of two regions required for DNA binding.</title>
        <authorList>
            <person name="Alekshun M.N."/>
            <person name="Kim Y.S."/>
            <person name="Levy S.B."/>
        </authorList>
    </citation>
    <scope>MUTAGENESIS</scope>
</reference>
<evidence type="ECO:0000255" key="1">
    <source>
        <dbReference type="PROSITE-ProRule" id="PRU00345"/>
    </source>
</evidence>
<evidence type="ECO:0000269" key="2">
    <source>
    </source>
</evidence>
<evidence type="ECO:0007829" key="3">
    <source>
        <dbReference type="PDB" id="1JGS"/>
    </source>
</evidence>
<evidence type="ECO:0007829" key="4">
    <source>
        <dbReference type="PDB" id="3VOD"/>
    </source>
</evidence>
<evidence type="ECO:0007829" key="5">
    <source>
        <dbReference type="PDB" id="5H3R"/>
    </source>
</evidence>
<comment type="function">
    <text>Repressor of the marRAB operon which is involved in the activation of both antibiotic resistance and oxidative stress genes. Binds to the marO operator/promoter site.</text>
</comment>
<keyword id="KW-0002">3D-structure</keyword>
<keyword id="KW-0046">Antibiotic resistance</keyword>
<keyword id="KW-0238">DNA-binding</keyword>
<keyword id="KW-1185">Reference proteome</keyword>
<keyword id="KW-0678">Repressor</keyword>
<keyword id="KW-0804">Transcription</keyword>
<keyword id="KW-0805">Transcription regulation</keyword>
<dbReference type="EMBL" id="M96235">
    <property type="protein sequence ID" value="AAC16394.2"/>
    <property type="molecule type" value="Genomic_DNA"/>
</dbReference>
<dbReference type="EMBL" id="U00096">
    <property type="protein sequence ID" value="AAC74603.2"/>
    <property type="molecule type" value="Genomic_DNA"/>
</dbReference>
<dbReference type="EMBL" id="AP009048">
    <property type="protein sequence ID" value="BAA15220.1"/>
    <property type="molecule type" value="Genomic_DNA"/>
</dbReference>
<dbReference type="PIR" id="E64907">
    <property type="entry name" value="E64907"/>
</dbReference>
<dbReference type="RefSeq" id="NP_416047.4">
    <property type="nucleotide sequence ID" value="NC_000913.3"/>
</dbReference>
<dbReference type="RefSeq" id="WP_000843414.1">
    <property type="nucleotide sequence ID" value="NZ_SSUW01000005.1"/>
</dbReference>
<dbReference type="PDB" id="1JGS">
    <property type="method" value="X-ray"/>
    <property type="resolution" value="2.30 A"/>
    <property type="chains" value="A=7-144"/>
</dbReference>
<dbReference type="PDB" id="3VB2">
    <property type="method" value="X-ray"/>
    <property type="resolution" value="2.60 A"/>
    <property type="chains" value="A/B=1-144"/>
</dbReference>
<dbReference type="PDB" id="3VOD">
    <property type="method" value="X-ray"/>
    <property type="resolution" value="2.60 A"/>
    <property type="chains" value="A/B=1-144"/>
</dbReference>
<dbReference type="PDB" id="3VOE">
    <property type="method" value="X-ray"/>
    <property type="resolution" value="2.60 A"/>
    <property type="chains" value="A/B=1-144"/>
</dbReference>
<dbReference type="PDB" id="4JBA">
    <property type="method" value="X-ray"/>
    <property type="resolution" value="2.50 A"/>
    <property type="chains" value="A/B=1-144"/>
</dbReference>
<dbReference type="PDB" id="5H3R">
    <property type="method" value="X-ray"/>
    <property type="resolution" value="2.67 A"/>
    <property type="chains" value="A/B=1-144"/>
</dbReference>
<dbReference type="PDBsum" id="1JGS"/>
<dbReference type="PDBsum" id="3VB2"/>
<dbReference type="PDBsum" id="3VOD"/>
<dbReference type="PDBsum" id="3VOE"/>
<dbReference type="PDBsum" id="4JBA"/>
<dbReference type="PDBsum" id="5H3R"/>
<dbReference type="SMR" id="P27245"/>
<dbReference type="BioGRID" id="4259660">
    <property type="interactions" value="261"/>
</dbReference>
<dbReference type="DIP" id="DIP-10164N"/>
<dbReference type="FunCoup" id="P27245">
    <property type="interactions" value="63"/>
</dbReference>
<dbReference type="STRING" id="511145.b1530"/>
<dbReference type="jPOST" id="P27245"/>
<dbReference type="PaxDb" id="511145-b1530"/>
<dbReference type="EnsemblBacteria" id="AAC74603">
    <property type="protein sequence ID" value="AAC74603"/>
    <property type="gene ID" value="b1530"/>
</dbReference>
<dbReference type="GeneID" id="945825"/>
<dbReference type="KEGG" id="ecj:JW5248"/>
<dbReference type="KEGG" id="eco:b1530"/>
<dbReference type="KEGG" id="ecoc:C3026_08840"/>
<dbReference type="PATRIC" id="fig|1411691.4.peg.736"/>
<dbReference type="EchoBASE" id="EB1405"/>
<dbReference type="eggNOG" id="COG1846">
    <property type="taxonomic scope" value="Bacteria"/>
</dbReference>
<dbReference type="HOGENOM" id="CLU_083287_18_5_6"/>
<dbReference type="InParanoid" id="P27245"/>
<dbReference type="OMA" id="YEATMVT"/>
<dbReference type="OrthoDB" id="6195716at2"/>
<dbReference type="PhylomeDB" id="P27245"/>
<dbReference type="BioCyc" id="EcoCyc:PD00364"/>
<dbReference type="EvolutionaryTrace" id="P27245"/>
<dbReference type="PRO" id="PR:P27245"/>
<dbReference type="Proteomes" id="UP000000625">
    <property type="component" value="Chromosome"/>
</dbReference>
<dbReference type="GO" id="GO:0003677">
    <property type="term" value="F:DNA binding"/>
    <property type="evidence" value="ECO:0000314"/>
    <property type="project" value="EcoCyc"/>
</dbReference>
<dbReference type="GO" id="GO:0003700">
    <property type="term" value="F:DNA-binding transcription factor activity"/>
    <property type="evidence" value="ECO:0007669"/>
    <property type="project" value="InterPro"/>
</dbReference>
<dbReference type="GO" id="GO:0071236">
    <property type="term" value="P:cellular response to antibiotic"/>
    <property type="evidence" value="ECO:0000315"/>
    <property type="project" value="EcoCyc"/>
</dbReference>
<dbReference type="GO" id="GO:0045892">
    <property type="term" value="P:negative regulation of DNA-templated transcription"/>
    <property type="evidence" value="ECO:0000315"/>
    <property type="project" value="EcoCyc"/>
</dbReference>
<dbReference type="GO" id="GO:0006355">
    <property type="term" value="P:regulation of DNA-templated transcription"/>
    <property type="evidence" value="ECO:0000318"/>
    <property type="project" value="GO_Central"/>
</dbReference>
<dbReference type="GO" id="GO:0009408">
    <property type="term" value="P:response to heat"/>
    <property type="evidence" value="ECO:0000315"/>
    <property type="project" value="EcoCyc"/>
</dbReference>
<dbReference type="GO" id="GO:0006950">
    <property type="term" value="P:response to stress"/>
    <property type="evidence" value="ECO:0000318"/>
    <property type="project" value="GO_Central"/>
</dbReference>
<dbReference type="FunFam" id="1.10.10.10:FF:000149">
    <property type="entry name" value="Multiple antibiotic resistance transcriptional regulator MarR"/>
    <property type="match status" value="1"/>
</dbReference>
<dbReference type="Gene3D" id="1.10.10.10">
    <property type="entry name" value="Winged helix-like DNA-binding domain superfamily/Winged helix DNA-binding domain"/>
    <property type="match status" value="1"/>
</dbReference>
<dbReference type="InterPro" id="IPR000835">
    <property type="entry name" value="HTH_MarR-typ"/>
</dbReference>
<dbReference type="InterPro" id="IPR039422">
    <property type="entry name" value="MarR/SlyA-like"/>
</dbReference>
<dbReference type="InterPro" id="IPR023187">
    <property type="entry name" value="Tscrpt_reg_MarR-type_CS"/>
</dbReference>
<dbReference type="InterPro" id="IPR036388">
    <property type="entry name" value="WH-like_DNA-bd_sf"/>
</dbReference>
<dbReference type="InterPro" id="IPR036390">
    <property type="entry name" value="WH_DNA-bd_sf"/>
</dbReference>
<dbReference type="NCBIfam" id="NF008565">
    <property type="entry name" value="PRK11512.1"/>
    <property type="match status" value="1"/>
</dbReference>
<dbReference type="PANTHER" id="PTHR33164:SF87">
    <property type="entry name" value="MULTIPLE ANTIBIOTIC RESISTANCE PROTEIN MARR"/>
    <property type="match status" value="1"/>
</dbReference>
<dbReference type="PANTHER" id="PTHR33164">
    <property type="entry name" value="TRANSCRIPTIONAL REGULATOR, MARR FAMILY"/>
    <property type="match status" value="1"/>
</dbReference>
<dbReference type="Pfam" id="PF01047">
    <property type="entry name" value="MarR"/>
    <property type="match status" value="1"/>
</dbReference>
<dbReference type="PRINTS" id="PR00598">
    <property type="entry name" value="HTHMARR"/>
</dbReference>
<dbReference type="SMART" id="SM00347">
    <property type="entry name" value="HTH_MARR"/>
    <property type="match status" value="1"/>
</dbReference>
<dbReference type="SUPFAM" id="SSF46785">
    <property type="entry name" value="Winged helix' DNA-binding domain"/>
    <property type="match status" value="1"/>
</dbReference>
<dbReference type="PROSITE" id="PS01117">
    <property type="entry name" value="HTH_MARR_1"/>
    <property type="match status" value="1"/>
</dbReference>
<dbReference type="PROSITE" id="PS50995">
    <property type="entry name" value="HTH_MARR_2"/>
    <property type="match status" value="1"/>
</dbReference>